<feature type="chain" id="PRO_0000204297" description="Hemocyanin subunit III">
    <location>
        <begin position="1"/>
        <end position="19" status="greater than"/>
    </location>
</feature>
<feature type="non-terminal residue" evidence="1">
    <location>
        <position position="19"/>
    </location>
</feature>
<protein>
    <recommendedName>
        <fullName>Hemocyanin subunit III</fullName>
    </recommendedName>
</protein>
<accession>P82313</accession>
<proteinExistence type="evidence at protein level"/>
<evidence type="ECO:0000305" key="1"/>
<organism evidence="1">
    <name type="scientific">Panulirus japonicus</name>
    <name type="common">Japanese spiny lobster</name>
    <name type="synonym">Palinurus japonicus</name>
    <dbReference type="NCBI Taxonomy" id="6736"/>
    <lineage>
        <taxon>Eukaryota</taxon>
        <taxon>Metazoa</taxon>
        <taxon>Ecdysozoa</taxon>
        <taxon>Arthropoda</taxon>
        <taxon>Crustacea</taxon>
        <taxon>Multicrustacea</taxon>
        <taxon>Malacostraca</taxon>
        <taxon>Eumalacostraca</taxon>
        <taxon>Eucarida</taxon>
        <taxon>Decapoda</taxon>
        <taxon>Pleocyemata</taxon>
        <taxon>Achelata</taxon>
        <taxon>Palinuroidea</taxon>
        <taxon>Palinuridae</taxon>
        <taxon>Panulirus</taxon>
    </lineage>
</organism>
<comment type="function">
    <text>Hemocyanins are copper-containing oxygen carriers occurring freely dissolved in the hemolymph of many mollusks and arthropods.</text>
</comment>
<comment type="subunit">
    <text>Composed of 3 major subunits (IB, II and III) and 1 minor subunit (IA) which form homohexamers and heterohexamers. May also form larger structures.</text>
</comment>
<comment type="subcellular location">
    <subcellularLocation>
        <location>Secreted</location>
        <location>Extracellular space</location>
    </subcellularLocation>
</comment>
<comment type="tissue specificity">
    <text>Hemolymph.</text>
</comment>
<comment type="similarity">
    <text evidence="1">Belongs to the tyrosinase family. Hemocyanin subfamily.</text>
</comment>
<reference evidence="1" key="1">
    <citation type="journal article" date="1988" name="Eur. J. Biochem.">
        <title>Subunits of Panulirus japonicus hemocyanin. 1. Isolation and properties.</title>
        <authorList>
            <person name="Makino N."/>
            <person name="Kimura S."/>
        </authorList>
    </citation>
    <scope>PROTEIN SEQUENCE</scope>
    <source>
        <tissue>Serum</tissue>
    </source>
</reference>
<name>HCY3_PANJA</name>
<keyword id="KW-0186">Copper</keyword>
<keyword id="KW-0903">Direct protein sequencing</keyword>
<keyword id="KW-0561">Oxygen transport</keyword>
<keyword id="KW-0964">Secreted</keyword>
<keyword id="KW-0813">Transport</keyword>
<dbReference type="PIR" id="S00495">
    <property type="entry name" value="S00495"/>
</dbReference>
<dbReference type="GO" id="GO:0005576">
    <property type="term" value="C:extracellular region"/>
    <property type="evidence" value="ECO:0007669"/>
    <property type="project" value="UniProtKB-SubCell"/>
</dbReference>
<dbReference type="GO" id="GO:0005344">
    <property type="term" value="F:oxygen carrier activity"/>
    <property type="evidence" value="ECO:0007669"/>
    <property type="project" value="UniProtKB-KW"/>
</dbReference>
<sequence>DAHGSGNAHKQQDINHLLD</sequence>